<protein>
    <recommendedName>
        <fullName>Hemoglobin subunit alpha-A</fullName>
    </recommendedName>
    <alternativeName>
        <fullName>Alpha-A-globin</fullName>
    </alternativeName>
    <alternativeName>
        <fullName>Hemoglobin alpha-A chain</fullName>
    </alternativeName>
</protein>
<comment type="function">
    <text>Involved in oxygen transport from the lung to the various peripheral tissues.</text>
</comment>
<comment type="subunit">
    <text>Heterotetramer of two alpha chains and two beta chains.</text>
</comment>
<comment type="tissue specificity">
    <text>Red blood cells.</text>
</comment>
<comment type="similarity">
    <text evidence="1">Belongs to the globin family.</text>
</comment>
<sequence length="141" mass="15687">VLSSGDKANVKSVWSKVQGHLEDYGAETLDRMFTVFPQTKTYFSHFDVHHGSTQIRSHGKKVMLALGDAVNHIDDIATALSALSDKHAHILRVDPVNFKLLSHCLLVVVARHHPTLFTPDVHVSLDKFMGTVSTVLTSKYR</sequence>
<organism>
    <name type="scientific">Caretta caretta</name>
    <name type="common">Loggerhead sea turtle</name>
    <dbReference type="NCBI Taxonomy" id="8467"/>
    <lineage>
        <taxon>Eukaryota</taxon>
        <taxon>Metazoa</taxon>
        <taxon>Chordata</taxon>
        <taxon>Craniata</taxon>
        <taxon>Vertebrata</taxon>
        <taxon>Euteleostomi</taxon>
        <taxon>Archelosauria</taxon>
        <taxon>Testudinata</taxon>
        <taxon>Testudines</taxon>
        <taxon>Cryptodira</taxon>
        <taxon>Durocryptodira</taxon>
        <taxon>Americhelydia</taxon>
        <taxon>Chelonioidea</taxon>
        <taxon>Cheloniidae</taxon>
        <taxon>Caretta</taxon>
    </lineage>
</organism>
<accession>Q10732</accession>
<name>HBA_CARCR</name>
<evidence type="ECO:0000255" key="1">
    <source>
        <dbReference type="PROSITE-ProRule" id="PRU00238"/>
    </source>
</evidence>
<feature type="chain" id="PRO_0000052587" description="Hemoglobin subunit alpha-A">
    <location>
        <begin position="1"/>
        <end position="141"/>
    </location>
</feature>
<feature type="domain" description="Globin" evidence="1">
    <location>
        <begin position="1"/>
        <end position="141"/>
    </location>
</feature>
<feature type="binding site" evidence="1">
    <location>
        <position position="58"/>
    </location>
    <ligand>
        <name>O2</name>
        <dbReference type="ChEBI" id="CHEBI:15379"/>
    </ligand>
</feature>
<feature type="binding site" description="proximal binding residue" evidence="1">
    <location>
        <position position="87"/>
    </location>
    <ligand>
        <name>heme b</name>
        <dbReference type="ChEBI" id="CHEBI:60344"/>
    </ligand>
    <ligandPart>
        <name>Fe</name>
        <dbReference type="ChEBI" id="CHEBI:18248"/>
    </ligandPart>
</feature>
<gene>
    <name type="primary">HBAA</name>
</gene>
<reference key="1">
    <citation type="journal article" date="1996" name="Biochem. J.">
        <title>Diving behaviour and haemoglobin function: the primary structure of the alpha- and beta-chains of the sea turtle (Caretta caretta) and its functional implications.</title>
        <authorList>
            <person name="Petruzzelli R."/>
            <person name="Aureli G."/>
            <person name="Lania A."/>
            <person name="Galtieri A."/>
            <person name="Desideri A."/>
            <person name="Giardina B."/>
        </authorList>
    </citation>
    <scope>PROTEIN SEQUENCE</scope>
</reference>
<keyword id="KW-0903">Direct protein sequencing</keyword>
<keyword id="KW-0349">Heme</keyword>
<keyword id="KW-0408">Iron</keyword>
<keyword id="KW-0479">Metal-binding</keyword>
<keyword id="KW-0561">Oxygen transport</keyword>
<keyword id="KW-0813">Transport</keyword>
<proteinExistence type="evidence at protein level"/>
<dbReference type="PIR" id="S70613">
    <property type="entry name" value="S70613"/>
</dbReference>
<dbReference type="SMR" id="Q10732"/>
<dbReference type="GO" id="GO:0072562">
    <property type="term" value="C:blood microparticle"/>
    <property type="evidence" value="ECO:0007669"/>
    <property type="project" value="TreeGrafter"/>
</dbReference>
<dbReference type="GO" id="GO:0031838">
    <property type="term" value="C:haptoglobin-hemoglobin complex"/>
    <property type="evidence" value="ECO:0007669"/>
    <property type="project" value="TreeGrafter"/>
</dbReference>
<dbReference type="GO" id="GO:0005833">
    <property type="term" value="C:hemoglobin complex"/>
    <property type="evidence" value="ECO:0007669"/>
    <property type="project" value="InterPro"/>
</dbReference>
<dbReference type="GO" id="GO:0031720">
    <property type="term" value="F:haptoglobin binding"/>
    <property type="evidence" value="ECO:0007669"/>
    <property type="project" value="TreeGrafter"/>
</dbReference>
<dbReference type="GO" id="GO:0020037">
    <property type="term" value="F:heme binding"/>
    <property type="evidence" value="ECO:0007669"/>
    <property type="project" value="InterPro"/>
</dbReference>
<dbReference type="GO" id="GO:0005506">
    <property type="term" value="F:iron ion binding"/>
    <property type="evidence" value="ECO:0007669"/>
    <property type="project" value="InterPro"/>
</dbReference>
<dbReference type="GO" id="GO:0043177">
    <property type="term" value="F:organic acid binding"/>
    <property type="evidence" value="ECO:0007669"/>
    <property type="project" value="TreeGrafter"/>
</dbReference>
<dbReference type="GO" id="GO:0019825">
    <property type="term" value="F:oxygen binding"/>
    <property type="evidence" value="ECO:0007669"/>
    <property type="project" value="InterPro"/>
</dbReference>
<dbReference type="GO" id="GO:0005344">
    <property type="term" value="F:oxygen carrier activity"/>
    <property type="evidence" value="ECO:0007669"/>
    <property type="project" value="UniProtKB-KW"/>
</dbReference>
<dbReference type="GO" id="GO:0004601">
    <property type="term" value="F:peroxidase activity"/>
    <property type="evidence" value="ECO:0007669"/>
    <property type="project" value="TreeGrafter"/>
</dbReference>
<dbReference type="GO" id="GO:0042744">
    <property type="term" value="P:hydrogen peroxide catabolic process"/>
    <property type="evidence" value="ECO:0007669"/>
    <property type="project" value="TreeGrafter"/>
</dbReference>
<dbReference type="CDD" id="cd08927">
    <property type="entry name" value="Hb-alpha-like"/>
    <property type="match status" value="1"/>
</dbReference>
<dbReference type="FunFam" id="1.10.490.10:FF:000002">
    <property type="entry name" value="Hemoglobin subunit alpha"/>
    <property type="match status" value="1"/>
</dbReference>
<dbReference type="Gene3D" id="1.10.490.10">
    <property type="entry name" value="Globins"/>
    <property type="match status" value="1"/>
</dbReference>
<dbReference type="InterPro" id="IPR000971">
    <property type="entry name" value="Globin"/>
</dbReference>
<dbReference type="InterPro" id="IPR009050">
    <property type="entry name" value="Globin-like_sf"/>
</dbReference>
<dbReference type="InterPro" id="IPR012292">
    <property type="entry name" value="Globin/Proto"/>
</dbReference>
<dbReference type="InterPro" id="IPR002338">
    <property type="entry name" value="Hemoglobin_a-typ"/>
</dbReference>
<dbReference type="InterPro" id="IPR050056">
    <property type="entry name" value="Hemoglobin_oxygen_transport"/>
</dbReference>
<dbReference type="InterPro" id="IPR002339">
    <property type="entry name" value="Hemoglobin_pi"/>
</dbReference>
<dbReference type="PANTHER" id="PTHR11442">
    <property type="entry name" value="HEMOGLOBIN FAMILY MEMBER"/>
    <property type="match status" value="1"/>
</dbReference>
<dbReference type="PANTHER" id="PTHR11442:SF48">
    <property type="entry name" value="HEMOGLOBIN SUBUNIT ALPHA"/>
    <property type="match status" value="1"/>
</dbReference>
<dbReference type="Pfam" id="PF00042">
    <property type="entry name" value="Globin"/>
    <property type="match status" value="1"/>
</dbReference>
<dbReference type="PRINTS" id="PR00612">
    <property type="entry name" value="ALPHAHAEM"/>
</dbReference>
<dbReference type="PRINTS" id="PR00815">
    <property type="entry name" value="PIHAEM"/>
</dbReference>
<dbReference type="SUPFAM" id="SSF46458">
    <property type="entry name" value="Globin-like"/>
    <property type="match status" value="1"/>
</dbReference>
<dbReference type="PROSITE" id="PS01033">
    <property type="entry name" value="GLOBIN"/>
    <property type="match status" value="1"/>
</dbReference>